<comment type="function">
    <text evidence="1">This protein binds specifically to 23S rRNA; its binding is stimulated by other ribosomal proteins, e.g. L4, L17, and L20. It is important during the early stages of 50S assembly. It makes multiple contacts with different domains of the 23S rRNA in the assembled 50S subunit and ribosome (By similarity).</text>
</comment>
<comment type="function">
    <text evidence="1">The globular domain of the protein is located near the polypeptide exit tunnel on the outside of the subunit, while an extended beta-hairpin is found that lines the wall of the exit tunnel in the center of the 70S ribosome.</text>
</comment>
<comment type="subunit">
    <text evidence="1">Part of the 50S ribosomal subunit.</text>
</comment>
<comment type="similarity">
    <text evidence="1">Belongs to the universal ribosomal protein uL22 family.</text>
</comment>
<organism>
    <name type="scientific">Escherichia coli O6:H1 (strain CFT073 / ATCC 700928 / UPEC)</name>
    <dbReference type="NCBI Taxonomy" id="199310"/>
    <lineage>
        <taxon>Bacteria</taxon>
        <taxon>Pseudomonadati</taxon>
        <taxon>Pseudomonadota</taxon>
        <taxon>Gammaproteobacteria</taxon>
        <taxon>Enterobacterales</taxon>
        <taxon>Enterobacteriaceae</taxon>
        <taxon>Escherichia</taxon>
    </lineage>
</organism>
<protein>
    <recommendedName>
        <fullName evidence="1">Large ribosomal subunit protein uL22</fullName>
    </recommendedName>
    <alternativeName>
        <fullName evidence="2">50S ribosomal protein L22</fullName>
    </alternativeName>
</protein>
<feature type="chain" id="PRO_0000125154" description="Large ribosomal subunit protein uL22">
    <location>
        <begin position="1"/>
        <end position="110"/>
    </location>
</feature>
<gene>
    <name evidence="1" type="primary">rplV</name>
    <name type="ordered locus">c4082</name>
</gene>
<name>RL22_ECOL6</name>
<reference key="1">
    <citation type="journal article" date="2002" name="Proc. Natl. Acad. Sci. U.S.A.">
        <title>Extensive mosaic structure revealed by the complete genome sequence of uropathogenic Escherichia coli.</title>
        <authorList>
            <person name="Welch R.A."/>
            <person name="Burland V."/>
            <person name="Plunkett G. III"/>
            <person name="Redford P."/>
            <person name="Roesch P."/>
            <person name="Rasko D."/>
            <person name="Buckles E.L."/>
            <person name="Liou S.-R."/>
            <person name="Boutin A."/>
            <person name="Hackett J."/>
            <person name="Stroud D."/>
            <person name="Mayhew G.F."/>
            <person name="Rose D.J."/>
            <person name="Zhou S."/>
            <person name="Schwartz D.C."/>
            <person name="Perna N.T."/>
            <person name="Mobley H.L.T."/>
            <person name="Donnenberg M.S."/>
            <person name="Blattner F.R."/>
        </authorList>
    </citation>
    <scope>NUCLEOTIDE SEQUENCE [LARGE SCALE GENOMIC DNA]</scope>
    <source>
        <strain>CFT073 / ATCC 700928 / UPEC</strain>
    </source>
</reference>
<proteinExistence type="inferred from homology"/>
<sequence>METIAKHRHARSSAQKVRLVADLIRGKKVSQALDILTYTNKKAAVLVKKVLESAIANAEHNDGADIDDLKVTKIFVDEGPSMKRIMPRAKGRADRILKRTSHITVVVSDR</sequence>
<keyword id="KW-1185">Reference proteome</keyword>
<keyword id="KW-0687">Ribonucleoprotein</keyword>
<keyword id="KW-0689">Ribosomal protein</keyword>
<keyword id="KW-0694">RNA-binding</keyword>
<keyword id="KW-0699">rRNA-binding</keyword>
<dbReference type="EMBL" id="AE014075">
    <property type="protein sequence ID" value="AAN82520.1"/>
    <property type="molecule type" value="Genomic_DNA"/>
</dbReference>
<dbReference type="RefSeq" id="WP_000447529.1">
    <property type="nucleotide sequence ID" value="NZ_CP051263.1"/>
</dbReference>
<dbReference type="SMR" id="P61176"/>
<dbReference type="STRING" id="199310.c4082"/>
<dbReference type="GeneID" id="93778672"/>
<dbReference type="KEGG" id="ecc:c4082"/>
<dbReference type="eggNOG" id="COG0091">
    <property type="taxonomic scope" value="Bacteria"/>
</dbReference>
<dbReference type="HOGENOM" id="CLU_083987_3_3_6"/>
<dbReference type="BioCyc" id="ECOL199310:C4082-MONOMER"/>
<dbReference type="Proteomes" id="UP000001410">
    <property type="component" value="Chromosome"/>
</dbReference>
<dbReference type="GO" id="GO:0022625">
    <property type="term" value="C:cytosolic large ribosomal subunit"/>
    <property type="evidence" value="ECO:0007669"/>
    <property type="project" value="TreeGrafter"/>
</dbReference>
<dbReference type="GO" id="GO:0019843">
    <property type="term" value="F:rRNA binding"/>
    <property type="evidence" value="ECO:0007669"/>
    <property type="project" value="UniProtKB-UniRule"/>
</dbReference>
<dbReference type="GO" id="GO:0003735">
    <property type="term" value="F:structural constituent of ribosome"/>
    <property type="evidence" value="ECO:0007669"/>
    <property type="project" value="InterPro"/>
</dbReference>
<dbReference type="GO" id="GO:0006412">
    <property type="term" value="P:translation"/>
    <property type="evidence" value="ECO:0007669"/>
    <property type="project" value="UniProtKB-UniRule"/>
</dbReference>
<dbReference type="CDD" id="cd00336">
    <property type="entry name" value="Ribosomal_L22"/>
    <property type="match status" value="1"/>
</dbReference>
<dbReference type="FunFam" id="3.90.470.10:FF:000001">
    <property type="entry name" value="50S ribosomal protein L22"/>
    <property type="match status" value="1"/>
</dbReference>
<dbReference type="Gene3D" id="3.90.470.10">
    <property type="entry name" value="Ribosomal protein L22/L17"/>
    <property type="match status" value="1"/>
</dbReference>
<dbReference type="HAMAP" id="MF_01331_B">
    <property type="entry name" value="Ribosomal_uL22_B"/>
    <property type="match status" value="1"/>
</dbReference>
<dbReference type="InterPro" id="IPR001063">
    <property type="entry name" value="Ribosomal_uL22"/>
</dbReference>
<dbReference type="InterPro" id="IPR005727">
    <property type="entry name" value="Ribosomal_uL22_bac/chlpt-type"/>
</dbReference>
<dbReference type="InterPro" id="IPR047867">
    <property type="entry name" value="Ribosomal_uL22_bac/org-type"/>
</dbReference>
<dbReference type="InterPro" id="IPR018260">
    <property type="entry name" value="Ribosomal_uL22_CS"/>
</dbReference>
<dbReference type="InterPro" id="IPR036394">
    <property type="entry name" value="Ribosomal_uL22_sf"/>
</dbReference>
<dbReference type="NCBIfam" id="TIGR01044">
    <property type="entry name" value="rplV_bact"/>
    <property type="match status" value="1"/>
</dbReference>
<dbReference type="PANTHER" id="PTHR13501">
    <property type="entry name" value="CHLOROPLAST 50S RIBOSOMAL PROTEIN L22-RELATED"/>
    <property type="match status" value="1"/>
</dbReference>
<dbReference type="PANTHER" id="PTHR13501:SF8">
    <property type="entry name" value="LARGE RIBOSOMAL SUBUNIT PROTEIN UL22M"/>
    <property type="match status" value="1"/>
</dbReference>
<dbReference type="Pfam" id="PF00237">
    <property type="entry name" value="Ribosomal_L22"/>
    <property type="match status" value="1"/>
</dbReference>
<dbReference type="SUPFAM" id="SSF54843">
    <property type="entry name" value="Ribosomal protein L22"/>
    <property type="match status" value="1"/>
</dbReference>
<dbReference type="PROSITE" id="PS00464">
    <property type="entry name" value="RIBOSOMAL_L22"/>
    <property type="match status" value="1"/>
</dbReference>
<evidence type="ECO:0000255" key="1">
    <source>
        <dbReference type="HAMAP-Rule" id="MF_01331"/>
    </source>
</evidence>
<evidence type="ECO:0000305" key="2"/>
<accession>P61176</accession>
<accession>P02423</accession>